<gene>
    <name evidence="1" type="primary">rpsC</name>
    <name type="ordered locus">EC55989_3730</name>
</gene>
<protein>
    <recommendedName>
        <fullName evidence="1">Small ribosomal subunit protein uS3</fullName>
    </recommendedName>
    <alternativeName>
        <fullName evidence="2">30S ribosomal protein S3</fullName>
    </alternativeName>
</protein>
<dbReference type="EMBL" id="CU928145">
    <property type="protein sequence ID" value="CAV00027.1"/>
    <property type="molecule type" value="Genomic_DNA"/>
</dbReference>
<dbReference type="RefSeq" id="WP_000529945.1">
    <property type="nucleotide sequence ID" value="NZ_CP028304.1"/>
</dbReference>
<dbReference type="SMR" id="B7L4K3"/>
<dbReference type="GeneID" id="97603663"/>
<dbReference type="KEGG" id="eck:EC55989_3730"/>
<dbReference type="HOGENOM" id="CLU_058591_0_2_6"/>
<dbReference type="Proteomes" id="UP000000746">
    <property type="component" value="Chromosome"/>
</dbReference>
<dbReference type="GO" id="GO:0022627">
    <property type="term" value="C:cytosolic small ribosomal subunit"/>
    <property type="evidence" value="ECO:0007669"/>
    <property type="project" value="TreeGrafter"/>
</dbReference>
<dbReference type="GO" id="GO:0003729">
    <property type="term" value="F:mRNA binding"/>
    <property type="evidence" value="ECO:0007669"/>
    <property type="project" value="UniProtKB-UniRule"/>
</dbReference>
<dbReference type="GO" id="GO:0019843">
    <property type="term" value="F:rRNA binding"/>
    <property type="evidence" value="ECO:0007669"/>
    <property type="project" value="UniProtKB-UniRule"/>
</dbReference>
<dbReference type="GO" id="GO:0003735">
    <property type="term" value="F:structural constituent of ribosome"/>
    <property type="evidence" value="ECO:0007669"/>
    <property type="project" value="InterPro"/>
</dbReference>
<dbReference type="GO" id="GO:0006412">
    <property type="term" value="P:translation"/>
    <property type="evidence" value="ECO:0007669"/>
    <property type="project" value="UniProtKB-UniRule"/>
</dbReference>
<dbReference type="CDD" id="cd02412">
    <property type="entry name" value="KH-II_30S_S3"/>
    <property type="match status" value="1"/>
</dbReference>
<dbReference type="FunFam" id="3.30.1140.32:FF:000001">
    <property type="entry name" value="30S ribosomal protein S3"/>
    <property type="match status" value="1"/>
</dbReference>
<dbReference type="FunFam" id="3.30.300.20:FF:000001">
    <property type="entry name" value="30S ribosomal protein S3"/>
    <property type="match status" value="1"/>
</dbReference>
<dbReference type="Gene3D" id="3.30.300.20">
    <property type="match status" value="1"/>
</dbReference>
<dbReference type="Gene3D" id="3.30.1140.32">
    <property type="entry name" value="Ribosomal protein S3, C-terminal domain"/>
    <property type="match status" value="1"/>
</dbReference>
<dbReference type="HAMAP" id="MF_01309_B">
    <property type="entry name" value="Ribosomal_uS3_B"/>
    <property type="match status" value="1"/>
</dbReference>
<dbReference type="InterPro" id="IPR004087">
    <property type="entry name" value="KH_dom"/>
</dbReference>
<dbReference type="InterPro" id="IPR015946">
    <property type="entry name" value="KH_dom-like_a/b"/>
</dbReference>
<dbReference type="InterPro" id="IPR004044">
    <property type="entry name" value="KH_dom_type_2"/>
</dbReference>
<dbReference type="InterPro" id="IPR009019">
    <property type="entry name" value="KH_sf_prok-type"/>
</dbReference>
<dbReference type="InterPro" id="IPR036419">
    <property type="entry name" value="Ribosomal_S3_C_sf"/>
</dbReference>
<dbReference type="InterPro" id="IPR005704">
    <property type="entry name" value="Ribosomal_uS3_bac-typ"/>
</dbReference>
<dbReference type="InterPro" id="IPR001351">
    <property type="entry name" value="Ribosomal_uS3_C"/>
</dbReference>
<dbReference type="InterPro" id="IPR018280">
    <property type="entry name" value="Ribosomal_uS3_CS"/>
</dbReference>
<dbReference type="NCBIfam" id="TIGR01009">
    <property type="entry name" value="rpsC_bact"/>
    <property type="match status" value="1"/>
</dbReference>
<dbReference type="PANTHER" id="PTHR11760">
    <property type="entry name" value="30S/40S RIBOSOMAL PROTEIN S3"/>
    <property type="match status" value="1"/>
</dbReference>
<dbReference type="PANTHER" id="PTHR11760:SF19">
    <property type="entry name" value="SMALL RIBOSOMAL SUBUNIT PROTEIN US3C"/>
    <property type="match status" value="1"/>
</dbReference>
<dbReference type="Pfam" id="PF07650">
    <property type="entry name" value="KH_2"/>
    <property type="match status" value="1"/>
</dbReference>
<dbReference type="Pfam" id="PF00189">
    <property type="entry name" value="Ribosomal_S3_C"/>
    <property type="match status" value="1"/>
</dbReference>
<dbReference type="SMART" id="SM00322">
    <property type="entry name" value="KH"/>
    <property type="match status" value="1"/>
</dbReference>
<dbReference type="SUPFAM" id="SSF54814">
    <property type="entry name" value="Prokaryotic type KH domain (KH-domain type II)"/>
    <property type="match status" value="1"/>
</dbReference>
<dbReference type="SUPFAM" id="SSF54821">
    <property type="entry name" value="Ribosomal protein S3 C-terminal domain"/>
    <property type="match status" value="1"/>
</dbReference>
<dbReference type="PROSITE" id="PS50823">
    <property type="entry name" value="KH_TYPE_2"/>
    <property type="match status" value="1"/>
</dbReference>
<dbReference type="PROSITE" id="PS00548">
    <property type="entry name" value="RIBOSOMAL_S3"/>
    <property type="match status" value="1"/>
</dbReference>
<comment type="function">
    <text evidence="1">Binds the lower part of the 30S subunit head. Binds mRNA in the 70S ribosome, positioning it for translation.</text>
</comment>
<comment type="subunit">
    <text evidence="1">Part of the 30S ribosomal subunit. Forms a tight complex with proteins S10 and S14.</text>
</comment>
<comment type="similarity">
    <text evidence="1">Belongs to the universal ribosomal protein uS3 family.</text>
</comment>
<accession>B7L4K3</accession>
<proteinExistence type="inferred from homology"/>
<evidence type="ECO:0000255" key="1">
    <source>
        <dbReference type="HAMAP-Rule" id="MF_01309"/>
    </source>
</evidence>
<evidence type="ECO:0000305" key="2"/>
<reference key="1">
    <citation type="journal article" date="2009" name="PLoS Genet.">
        <title>Organised genome dynamics in the Escherichia coli species results in highly diverse adaptive paths.</title>
        <authorList>
            <person name="Touchon M."/>
            <person name="Hoede C."/>
            <person name="Tenaillon O."/>
            <person name="Barbe V."/>
            <person name="Baeriswyl S."/>
            <person name="Bidet P."/>
            <person name="Bingen E."/>
            <person name="Bonacorsi S."/>
            <person name="Bouchier C."/>
            <person name="Bouvet O."/>
            <person name="Calteau A."/>
            <person name="Chiapello H."/>
            <person name="Clermont O."/>
            <person name="Cruveiller S."/>
            <person name="Danchin A."/>
            <person name="Diard M."/>
            <person name="Dossat C."/>
            <person name="Karoui M.E."/>
            <person name="Frapy E."/>
            <person name="Garry L."/>
            <person name="Ghigo J.M."/>
            <person name="Gilles A.M."/>
            <person name="Johnson J."/>
            <person name="Le Bouguenec C."/>
            <person name="Lescat M."/>
            <person name="Mangenot S."/>
            <person name="Martinez-Jehanne V."/>
            <person name="Matic I."/>
            <person name="Nassif X."/>
            <person name="Oztas S."/>
            <person name="Petit M.A."/>
            <person name="Pichon C."/>
            <person name="Rouy Z."/>
            <person name="Ruf C.S."/>
            <person name="Schneider D."/>
            <person name="Tourret J."/>
            <person name="Vacherie B."/>
            <person name="Vallenet D."/>
            <person name="Medigue C."/>
            <person name="Rocha E.P.C."/>
            <person name="Denamur E."/>
        </authorList>
    </citation>
    <scope>NUCLEOTIDE SEQUENCE [LARGE SCALE GENOMIC DNA]</scope>
    <source>
        <strain>55989 / EAEC</strain>
    </source>
</reference>
<feature type="chain" id="PRO_1000165495" description="Small ribosomal subunit protein uS3">
    <location>
        <begin position="1"/>
        <end position="233"/>
    </location>
</feature>
<feature type="domain" description="KH type-2" evidence="1">
    <location>
        <begin position="39"/>
        <end position="107"/>
    </location>
</feature>
<keyword id="KW-1185">Reference proteome</keyword>
<keyword id="KW-0687">Ribonucleoprotein</keyword>
<keyword id="KW-0689">Ribosomal protein</keyword>
<keyword id="KW-0694">RNA-binding</keyword>
<keyword id="KW-0699">rRNA-binding</keyword>
<organism>
    <name type="scientific">Escherichia coli (strain 55989 / EAEC)</name>
    <dbReference type="NCBI Taxonomy" id="585055"/>
    <lineage>
        <taxon>Bacteria</taxon>
        <taxon>Pseudomonadati</taxon>
        <taxon>Pseudomonadota</taxon>
        <taxon>Gammaproteobacteria</taxon>
        <taxon>Enterobacterales</taxon>
        <taxon>Enterobacteriaceae</taxon>
        <taxon>Escherichia</taxon>
    </lineage>
</organism>
<sequence>MGQKVHPNGIRLGIVKPWNSTWFANTKEFADNLDSDFKVRQYLTKELAKASVSRIVIERPAKSIRVTIHTARPGIVIGKKGEDVEKLRKVVADIAGVPAQINIAEVRKPELDAKLVADSITSQLERRVMFRRAMKRAVQNAMRLGAKGIKVEVSGRLGGAEIARTEWYREGRVPLHTLRADIDYNTSEAHTTYGVIGVKVWIFKGEILGGMAAVEQPEKPAAQPKKQQRKGRK</sequence>
<name>RS3_ECO55</name>